<keyword id="KW-0012">Acyltransferase</keyword>
<keyword id="KW-0963">Cytoplasm</keyword>
<keyword id="KW-0808">Transferase</keyword>
<organism>
    <name type="scientific">Streptomyces sp. (strain CL190)</name>
    <dbReference type="NCBI Taxonomy" id="93372"/>
    <lineage>
        <taxon>Bacteria</taxon>
        <taxon>Bacillati</taxon>
        <taxon>Actinomycetota</taxon>
        <taxon>Actinomycetes</taxon>
        <taxon>Kitasatosporales</taxon>
        <taxon>Streptomycetaceae</taxon>
        <taxon>Streptomyces</taxon>
    </lineage>
</organism>
<dbReference type="EC" id="2.3.1.194"/>
<dbReference type="EMBL" id="AB540131">
    <property type="protein sequence ID" value="BAJ10048.1"/>
    <property type="molecule type" value="Genomic_DNA"/>
</dbReference>
<dbReference type="EMBL" id="AB272317">
    <property type="protein sequence ID" value="BAJ83474.1"/>
    <property type="molecule type" value="Genomic_DNA"/>
</dbReference>
<dbReference type="SMR" id="D7URV0"/>
<dbReference type="DIP" id="DIP-59345N"/>
<dbReference type="KEGG" id="ag:BAJ10048"/>
<dbReference type="BRENDA" id="2.3.1.194">
    <property type="organism ID" value="15673"/>
</dbReference>
<dbReference type="SABIO-RK" id="D7URV0"/>
<dbReference type="UniPathway" id="UPA00058"/>
<dbReference type="GO" id="GO:0005737">
    <property type="term" value="C:cytoplasm"/>
    <property type="evidence" value="ECO:0007669"/>
    <property type="project" value="UniProtKB-SubCell"/>
</dbReference>
<dbReference type="GO" id="GO:0004315">
    <property type="term" value="F:3-oxoacyl-[acyl-carrier-protein] synthase activity"/>
    <property type="evidence" value="ECO:0007669"/>
    <property type="project" value="InterPro"/>
</dbReference>
<dbReference type="GO" id="GO:0016747">
    <property type="term" value="F:acyltransferase activity, transferring groups other than amino-acyl groups"/>
    <property type="evidence" value="ECO:0000314"/>
    <property type="project" value="UniProtKB"/>
</dbReference>
<dbReference type="GO" id="GO:0006633">
    <property type="term" value="P:fatty acid biosynthetic process"/>
    <property type="evidence" value="ECO:0007669"/>
    <property type="project" value="InterPro"/>
</dbReference>
<dbReference type="GO" id="GO:0019287">
    <property type="term" value="P:isopentenyl diphosphate biosynthetic process, mevalonate pathway"/>
    <property type="evidence" value="ECO:0000314"/>
    <property type="project" value="UniProtKB"/>
</dbReference>
<dbReference type="GO" id="GO:0044550">
    <property type="term" value="P:secondary metabolite biosynthetic process"/>
    <property type="evidence" value="ECO:0007669"/>
    <property type="project" value="TreeGrafter"/>
</dbReference>
<dbReference type="CDD" id="cd00830">
    <property type="entry name" value="KAS_III"/>
    <property type="match status" value="1"/>
</dbReference>
<dbReference type="Gene3D" id="3.40.47.10">
    <property type="match status" value="1"/>
</dbReference>
<dbReference type="InterPro" id="IPR013747">
    <property type="entry name" value="ACP_syn_III_C"/>
</dbReference>
<dbReference type="InterPro" id="IPR013751">
    <property type="entry name" value="ACP_syn_III_N"/>
</dbReference>
<dbReference type="InterPro" id="IPR016039">
    <property type="entry name" value="Thiolase-like"/>
</dbReference>
<dbReference type="NCBIfam" id="NF006829">
    <property type="entry name" value="PRK09352.1"/>
    <property type="match status" value="1"/>
</dbReference>
<dbReference type="PANTHER" id="PTHR34069">
    <property type="entry name" value="3-OXOACYL-[ACYL-CARRIER-PROTEIN] SYNTHASE 3"/>
    <property type="match status" value="1"/>
</dbReference>
<dbReference type="PANTHER" id="PTHR34069:SF2">
    <property type="entry name" value="BETA-KETOACYL-[ACYL-CARRIER-PROTEIN] SYNTHASE III"/>
    <property type="match status" value="1"/>
</dbReference>
<dbReference type="Pfam" id="PF08545">
    <property type="entry name" value="ACP_syn_III"/>
    <property type="match status" value="1"/>
</dbReference>
<dbReference type="Pfam" id="PF08541">
    <property type="entry name" value="ACP_syn_III_C"/>
    <property type="match status" value="1"/>
</dbReference>
<dbReference type="SUPFAM" id="SSF53901">
    <property type="entry name" value="Thiolase-like"/>
    <property type="match status" value="1"/>
</dbReference>
<gene>
    <name type="primary">nphT7</name>
    <name type="synonym">fhsA</name>
</gene>
<accession>D7URV0</accession>
<proteinExistence type="evidence at protein level"/>
<feature type="chain" id="PRO_0000418421" description="Acetoacetyl CoA synthase NphT7">
    <location>
        <begin position="1"/>
        <end position="329"/>
    </location>
</feature>
<feature type="active site" evidence="3">
    <location>
        <position position="115"/>
    </location>
</feature>
<feature type="active site" evidence="3">
    <location>
        <position position="256"/>
    </location>
</feature>
<feature type="active site" evidence="1">
    <location>
        <position position="286"/>
    </location>
</feature>
<feature type="mutagenesis site" description="Loss of condensation activity, but retains decarboxylation activity." evidence="2">
    <original>C</original>
    <variation>A</variation>
    <location>
        <position position="115"/>
    </location>
</feature>
<feature type="mutagenesis site" description="40-fold decrease in activity." evidence="2">
    <original>H</original>
    <variation>A</variation>
    <location>
        <position position="256"/>
    </location>
</feature>
<comment type="function">
    <text evidence="2">Catalyzes the condensation of acetyl-CoA and malonyl-CoA to form acetoacetyl-CoA and CoA. Does not accept malonyl-[acyl-carrier-protein] as a substrate. Can also convert malonyl-CoA into acetyl-CoA via decarboxylation of malonyl-CoA.</text>
</comment>
<comment type="catalytic activity">
    <reaction evidence="2">
        <text>malonyl-CoA + acetyl-CoA + H(+) = acetoacetyl-CoA + CO2 + CoA</text>
        <dbReference type="Rhea" id="RHEA:28250"/>
        <dbReference type="ChEBI" id="CHEBI:15378"/>
        <dbReference type="ChEBI" id="CHEBI:16526"/>
        <dbReference type="ChEBI" id="CHEBI:57286"/>
        <dbReference type="ChEBI" id="CHEBI:57287"/>
        <dbReference type="ChEBI" id="CHEBI:57288"/>
        <dbReference type="ChEBI" id="CHEBI:57384"/>
        <dbReference type="EC" id="2.3.1.194"/>
    </reaction>
</comment>
<comment type="biophysicochemical properties">
    <kinetics>
        <KM evidence="2">68 uM for acetyl-CoA</KM>
        <KM evidence="2">28 uM for malonyl-CoA</KM>
        <Vmax evidence="2">8.9 umol/min/mg enzyme</Vmax>
    </kinetics>
</comment>
<comment type="pathway">
    <text evidence="2">Metabolic intermediate biosynthesis; (R)-mevalonate biosynthesis.</text>
</comment>
<comment type="subunit">
    <text evidence="4">Homodimer.</text>
</comment>
<comment type="subcellular location">
    <subcellularLocation>
        <location evidence="1">Cytoplasm</location>
    </subcellularLocation>
</comment>
<comment type="similarity">
    <text evidence="3">Belongs to the thiolase-like superfamily. FabH family.</text>
</comment>
<reference key="1">
    <citation type="journal article" date="2010" name="Proc. Natl. Acad. Sci. U.S.A.">
        <title>Unprecedented acetoacetyl-coenzyme A synthesizing enzyme of the thiolase superfamily involved in the mevalonate pathway.</title>
        <authorList>
            <person name="Okamura E."/>
            <person name="Tomita T."/>
            <person name="Sawa R."/>
            <person name="Nishiyama M."/>
            <person name="Kuzuyama T."/>
        </authorList>
    </citation>
    <scope>NUCLEOTIDE SEQUENCE [GENOMIC DNA]</scope>
    <scope>FUNCTION</scope>
    <scope>CATALYTIC ACTIVITY</scope>
    <scope>BIOPHYSICOCHEMICAL PROPERTIES</scope>
    <scope>PATHWAY</scope>
    <scope>SUBUNIT</scope>
    <scope>GENE NAME</scope>
    <scope>MUTAGENESIS OF CYS-115 AND HIS-256</scope>
    <source>
        <strain>CL190</strain>
    </source>
</reference>
<sequence length="329" mass="34518">MTDVRFRIIGTGAYVPERIVSNDEVGAPAGVDDDWITRKTGIRQRRWAADDQATSDLATAAGRAALKAAGITPEQLTVIAVATSTPDRPQPPTAAYVQHHLGATGTAAFDVNAVCSGTVFALSSVAGTLVYRGGYALVIGADLYSRILNPADRKTVVLFGDGAGAMVLGPTSTGTGPIVRRVALHTFGGLTDLIRVPAGGSRQPLDTDGLDAGLQYFAMDGREVRRFVTEHLPQLIKGFLHEAGVDAADISHFVPHQANGVMLDEVFGELHLPRATMHRTVETYGNTGAASIPITMDAAVRAGSFRPGELVLLAGFGGGMAASFALIEW</sequence>
<evidence type="ECO:0000250" key="1"/>
<evidence type="ECO:0000269" key="2">
    <source>
    </source>
</evidence>
<evidence type="ECO:0000305" key="3"/>
<evidence type="ECO:0000305" key="4">
    <source>
    </source>
</evidence>
<protein>
    <recommendedName>
        <fullName>Acetoacetyl CoA synthase NphT7</fullName>
        <ecNumber>2.3.1.194</ecNumber>
    </recommendedName>
</protein>
<name>NPHT7_STRC1</name>